<protein>
    <recommendedName>
        <fullName evidence="1">Protein TIC 214</fullName>
    </recommendedName>
    <alternativeName>
        <fullName evidence="1">Translocon at the inner envelope membrane of chloroplasts 214</fullName>
        <shortName evidence="1">AtTIC214</shortName>
    </alternativeName>
</protein>
<keyword id="KW-0150">Chloroplast</keyword>
<keyword id="KW-0472">Membrane</keyword>
<keyword id="KW-0934">Plastid</keyword>
<keyword id="KW-1001">Plastid inner membrane</keyword>
<keyword id="KW-0653">Protein transport</keyword>
<keyword id="KW-0812">Transmembrane</keyword>
<keyword id="KW-1133">Transmembrane helix</keyword>
<keyword id="KW-0813">Transport</keyword>
<organism>
    <name type="scientific">Nymphaea alba</name>
    <name type="common">White water-lily</name>
    <name type="synonym">Castalia alba</name>
    <dbReference type="NCBI Taxonomy" id="34301"/>
    <lineage>
        <taxon>Eukaryota</taxon>
        <taxon>Viridiplantae</taxon>
        <taxon>Streptophyta</taxon>
        <taxon>Embryophyta</taxon>
        <taxon>Tracheophyta</taxon>
        <taxon>Spermatophyta</taxon>
        <taxon>Magnoliopsida</taxon>
        <taxon>Nymphaeales</taxon>
        <taxon>Nymphaeaceae</taxon>
        <taxon>Nymphaea</taxon>
    </lineage>
</organism>
<reference key="1">
    <citation type="journal article" date="2004" name="Mol. Biol. Evol.">
        <title>The chloroplast genome of Nymphaea alba: whole-genome analyses and the problem of identifying the most basal angiosperm.</title>
        <authorList>
            <person name="Goremykin V.V."/>
            <person name="Hirsch-Ernst K.I."/>
            <person name="Woelfl S."/>
            <person name="Hellwig F.H."/>
        </authorList>
    </citation>
    <scope>NUCLEOTIDE SEQUENCE [LARGE SCALE GENOMIC DNA]</scope>
</reference>
<proteinExistence type="inferred from homology"/>
<sequence>MILKYSLLGNLLLLWINIVNSVVMVGLYYGFLTTFSIGPSYLLLLRTRVMKEGSEKEVSATTAFIMGQFIVFISTYYPPLHLALSRPHTLTVLVIPYLLSHFWFFWNNKKSLFDYRSTHGNFIPNLSIQYVFLNNLIFQLFNHFVLPSSTLTRLVDISMFRYNNKILFVTSSFFGWLIGHMLLMKCIGLVLSWPWEKMRSNALFRSNKYLMSKWRNSVSQIFSILLFIICICYLGRMPSPIITKKLKESSKREEKKKTEEEGNVEIERVSKTNKIKQEEDGSVEEDLSISLEMEERWNLYKKIYETEEIWLNGKEKDEFDLKEKEKNKLLGIEKSLLSLLFDYQRWNRPLRYIENDRFSNAVRNEMSQSFFYTCASDGKQRISFTYPPSLSTFFEMIKKKMSFRTAEKLPAEDLSNEWVSTTKKQRDNLRNEFINRIEAIDKGSLILNVVEKRARLCNDEEEQECLPKFYDPLLNGPYRGTRKKGYLYSIRNDSTTSTRGSTKTAWINKIHAILFSKDYREFEREFEHEMYKLGVKSSSTGIEDSSVSIGEFTEEAEEAEKSRTRFKQFAFGGEEKVFEKVFDMVRADPNDQKISNLPIEEIKKKVPRWLYKLTSDLDFEEEEEEEEEDDQEESTDDHGIRSRKGKRVVIYTDTNQGTNIINTTNNIIKTHDNIIKTTNDNIIKTTTDNIINTNDNIIKTTDNIINTNDNIIKTTDNIINTNDNIIKTTDSNREKNSDDKVENGDQAEENEMALIRYSQQSDFRRDLIKGSMRAQRRKTVTWEMFQTDAHSPLFFDRIDKTPLFSFDISRMMNLIFRNWMEEKSPKMKTSSYVGEGAKEKEKIEEEHEEEKGEYKRKEDKRQEEERIAIAETWDNIIFAQAIRGSILVTHSILRKYIVLPSLIIVKNIGRMLLFQFPEWYEDFNEWSREMHVKCTYNGVQLSETEFPKDWLTDGIQIKILFPFSLKPWHRSKLRSHHKDLRKKQKNFCFLTIWGMETELPFGSPRKKPFFFEPIHKAFEKKIIKVKKKGFFFLIIIKDNIKGFIKILNEKIRWIIKIVLFIKIKVKEVFFFFVLRRVSDPSQNEEPSKNEKDSKISNRIIHESPIRIVSRDWTNDSLIEIKINDLADKTTKIWDQVEKIRKDKKKKPLTPDIEDIDISTNKGNCSNKRTESRKHIWQISKKRRSARLISKWDSFMKSFIERIYMSILLCITNIYRIYVQFFLDSTKKTLNGYTYNDEIKEKDTNEPNPNIIPFISTVKSLSTYTTNISSDSNSPIYCDLSSLSQAYVFYKLLQTQVSNKYKSESIFHYYRTYPFIKDGIKDYFHDYFHTRGIFDSESKHKKLRNSGMSEWKNWLKSHYQYNLSHDKWSRLAPLKWRKKVNQHRTIQNNDSPKSGSYEEKDQLIHSGKKDYSKLGLLKSPSREMKSPSREKKIKKHYRYDLLSYKYLNYEDVKDSNIYGSPLQVNRHGEISNYNTHKYKSFYAITINDSLEDKYTIDRDQNLDRKYFELRITNFDPRNNIETRTSTDIGTFINKKKKTTKTGTNKKDILSLYIRIHQEIQTKQKEFFFDWMGMNEQMLDRTISNLRPWFLPEFVPLYDRYTTNPWIIPINLILFDFHGNKTSDLYIDPKVESNQKERFHPKPKVESNQKGYLELENRNRDEKERQHQGNLISDIRNKKKDVGANSAGSDIKKRRKKKKFKSKKEAELDLFLKKYFIFQLRWDDPFNKGMNNNIKVYCLLLRLMNPNEIAISSIQSGEMGLDVMLINRGFSLPELIKKGIFLIEPVRLSIKRDGISIMYQTIAISLTHKIQHQTNQGYQLKKYIDKNYFNGSIARHGGVRVNGDNNNYDLLVPEHILSPSHRRELRILSRFNYRNRNLVNKNPVFCNRAKTNAQGFEKFVNRDKHFHTDTNNSLKWKVFLWPTHRLEDLACMNRYWFDTNNGSRFSMSRIHMYQQFGIRGCYSQFPSLSRAWYMRTCK</sequence>
<feature type="chain" id="PRO_0000262619" description="Protein TIC 214">
    <location>
        <begin position="1"/>
        <end position="1976"/>
    </location>
</feature>
<feature type="transmembrane region" description="Helical" evidence="2">
    <location>
        <begin position="11"/>
        <end position="31"/>
    </location>
</feature>
<feature type="transmembrane region" description="Helical" evidence="2">
    <location>
        <begin position="64"/>
        <end position="84"/>
    </location>
</feature>
<feature type="transmembrane region" description="Helical" evidence="2">
    <location>
        <begin position="87"/>
        <end position="107"/>
    </location>
</feature>
<feature type="transmembrane region" description="Helical" evidence="2">
    <location>
        <begin position="126"/>
        <end position="146"/>
    </location>
</feature>
<feature type="transmembrane region" description="Helical" evidence="2">
    <location>
        <begin position="173"/>
        <end position="193"/>
    </location>
</feature>
<feature type="transmembrane region" description="Helical" evidence="2">
    <location>
        <begin position="221"/>
        <end position="241"/>
    </location>
</feature>
<feature type="transmembrane region" description="Helical" evidence="2">
    <location>
        <begin position="1054"/>
        <end position="1074"/>
    </location>
</feature>
<feature type="transmembrane region" description="Helical" evidence="2">
    <location>
        <begin position="1202"/>
        <end position="1222"/>
    </location>
</feature>
<feature type="region of interest" description="Disordered" evidence="3">
    <location>
        <begin position="619"/>
        <end position="642"/>
    </location>
</feature>
<feature type="region of interest" description="Disordered" evidence="3">
    <location>
        <begin position="830"/>
        <end position="861"/>
    </location>
</feature>
<feature type="region of interest" description="Disordered" evidence="3">
    <location>
        <begin position="1633"/>
        <end position="1669"/>
    </location>
</feature>
<feature type="compositionally biased region" description="Acidic residues" evidence="3">
    <location>
        <begin position="619"/>
        <end position="635"/>
    </location>
</feature>
<feature type="compositionally biased region" description="Basic and acidic residues" evidence="3">
    <location>
        <begin position="836"/>
        <end position="861"/>
    </location>
</feature>
<feature type="compositionally biased region" description="Basic and acidic residues" evidence="3">
    <location>
        <begin position="1633"/>
        <end position="1665"/>
    </location>
</feature>
<gene>
    <name evidence="1" type="primary">TIC214</name>
    <name type="synonym">ycf1</name>
</gene>
<comment type="function">
    <text evidence="1">Involved in protein precursor import into chloroplasts. May be part of an intermediate translocation complex acting as a protein-conducting channel at the inner envelope.</text>
</comment>
<comment type="subunit">
    <text evidence="1">Part of the Tic complex.</text>
</comment>
<comment type="subcellular location">
    <subcellularLocation>
        <location evidence="1">Plastid</location>
        <location evidence="1">Chloroplast inner membrane</location>
        <topology evidence="2">Multi-pass membrane protein</topology>
    </subcellularLocation>
</comment>
<comment type="similarity">
    <text evidence="4">Belongs to the TIC214 family.</text>
</comment>
<accession>Q6EVZ2</accession>
<name>TI214_NYMAL</name>
<evidence type="ECO:0000250" key="1">
    <source>
        <dbReference type="UniProtKB" id="P56785"/>
    </source>
</evidence>
<evidence type="ECO:0000255" key="2"/>
<evidence type="ECO:0000256" key="3">
    <source>
        <dbReference type="SAM" id="MobiDB-lite"/>
    </source>
</evidence>
<evidence type="ECO:0000305" key="4"/>
<dbReference type="EMBL" id="AJ627251">
    <property type="protein sequence ID" value="CAF28654.1"/>
    <property type="molecule type" value="Genomic_DNA"/>
</dbReference>
<dbReference type="RefSeq" id="YP_053214.1">
    <property type="nucleotide sequence ID" value="NC_006050.1"/>
</dbReference>
<dbReference type="GeneID" id="2896244"/>
<dbReference type="GO" id="GO:0009706">
    <property type="term" value="C:chloroplast inner membrane"/>
    <property type="evidence" value="ECO:0007669"/>
    <property type="project" value="UniProtKB-SubCell"/>
</dbReference>
<dbReference type="GO" id="GO:0015031">
    <property type="term" value="P:protein transport"/>
    <property type="evidence" value="ECO:0007669"/>
    <property type="project" value="UniProtKB-KW"/>
</dbReference>
<dbReference type="InterPro" id="IPR008896">
    <property type="entry name" value="TIC214"/>
</dbReference>
<dbReference type="PANTHER" id="PTHR33163:SF40">
    <property type="entry name" value="PROTEIN TIC 214"/>
    <property type="match status" value="1"/>
</dbReference>
<dbReference type="PANTHER" id="PTHR33163">
    <property type="entry name" value="PROTEIN TIC 214-RELATED"/>
    <property type="match status" value="1"/>
</dbReference>
<dbReference type="Pfam" id="PF05758">
    <property type="entry name" value="Ycf1"/>
    <property type="match status" value="3"/>
</dbReference>
<geneLocation type="chloroplast"/>